<dbReference type="EC" id="1.8.1.9"/>
<dbReference type="EMBL" id="AB379907">
    <property type="protein sequence ID" value="BAH20464.1"/>
    <property type="molecule type" value="mRNA"/>
</dbReference>
<dbReference type="STRING" id="2903.B9A1H3"/>
<dbReference type="PaxDb" id="2903-EOD04034"/>
<dbReference type="eggNOG" id="KOG4716">
    <property type="taxonomic scope" value="Eukaryota"/>
</dbReference>
<dbReference type="BRENDA" id="1.8.1.9">
    <property type="organism ID" value="2068"/>
</dbReference>
<dbReference type="GO" id="GO:0005829">
    <property type="term" value="C:cytosol"/>
    <property type="evidence" value="ECO:0007669"/>
    <property type="project" value="TreeGrafter"/>
</dbReference>
<dbReference type="GO" id="GO:0005739">
    <property type="term" value="C:mitochondrion"/>
    <property type="evidence" value="ECO:0007669"/>
    <property type="project" value="TreeGrafter"/>
</dbReference>
<dbReference type="GO" id="GO:0050660">
    <property type="term" value="F:flavin adenine dinucleotide binding"/>
    <property type="evidence" value="ECO:0007669"/>
    <property type="project" value="InterPro"/>
</dbReference>
<dbReference type="GO" id="GO:0004362">
    <property type="term" value="F:glutathione-disulfide reductase (NADPH) activity"/>
    <property type="evidence" value="ECO:0007669"/>
    <property type="project" value="TreeGrafter"/>
</dbReference>
<dbReference type="GO" id="GO:0004791">
    <property type="term" value="F:thioredoxin-disulfide reductase (NADPH) activity"/>
    <property type="evidence" value="ECO:0007669"/>
    <property type="project" value="UniProtKB-EC"/>
</dbReference>
<dbReference type="GO" id="GO:0045454">
    <property type="term" value="P:cell redox homeostasis"/>
    <property type="evidence" value="ECO:0007669"/>
    <property type="project" value="InterPro"/>
</dbReference>
<dbReference type="GO" id="GO:0034599">
    <property type="term" value="P:cellular response to oxidative stress"/>
    <property type="evidence" value="ECO:0007669"/>
    <property type="project" value="TreeGrafter"/>
</dbReference>
<dbReference type="GO" id="GO:0006749">
    <property type="term" value="P:glutathione metabolic process"/>
    <property type="evidence" value="ECO:0007669"/>
    <property type="project" value="TreeGrafter"/>
</dbReference>
<dbReference type="FunFam" id="3.50.50.60:FF:000190">
    <property type="entry name" value="Thioredoxin reductase"/>
    <property type="match status" value="1"/>
</dbReference>
<dbReference type="FunFam" id="3.30.390.30:FF:000004">
    <property type="entry name" value="Thioredoxin reductase 1, cytoplasmic"/>
    <property type="match status" value="1"/>
</dbReference>
<dbReference type="Gene3D" id="3.30.390.30">
    <property type="match status" value="1"/>
</dbReference>
<dbReference type="Gene3D" id="3.50.50.60">
    <property type="entry name" value="FAD/NAD(P)-binding domain"/>
    <property type="match status" value="2"/>
</dbReference>
<dbReference type="InterPro" id="IPR036188">
    <property type="entry name" value="FAD/NAD-bd_sf"/>
</dbReference>
<dbReference type="InterPro" id="IPR023753">
    <property type="entry name" value="FAD/NAD-binding_dom"/>
</dbReference>
<dbReference type="InterPro" id="IPR016156">
    <property type="entry name" value="FAD/NAD-linked_Rdtase_dimer_sf"/>
</dbReference>
<dbReference type="InterPro" id="IPR046952">
    <property type="entry name" value="GSHR/TRXR-like"/>
</dbReference>
<dbReference type="InterPro" id="IPR001100">
    <property type="entry name" value="Pyr_nuc-diS_OxRdtase"/>
</dbReference>
<dbReference type="InterPro" id="IPR004099">
    <property type="entry name" value="Pyr_nucl-diS_OxRdtase_dimer"/>
</dbReference>
<dbReference type="InterPro" id="IPR012999">
    <property type="entry name" value="Pyr_OxRdtase_I_AS"/>
</dbReference>
<dbReference type="InterPro" id="IPR006338">
    <property type="entry name" value="Thioredoxin/glutathione_Rdtase"/>
</dbReference>
<dbReference type="NCBIfam" id="TIGR01438">
    <property type="entry name" value="TGR"/>
    <property type="match status" value="1"/>
</dbReference>
<dbReference type="PANTHER" id="PTHR42737">
    <property type="entry name" value="GLUTATHIONE REDUCTASE"/>
    <property type="match status" value="1"/>
</dbReference>
<dbReference type="PANTHER" id="PTHR42737:SF8">
    <property type="entry name" value="THIOREDOXIN-DISULFIDE REDUCTASE"/>
    <property type="match status" value="1"/>
</dbReference>
<dbReference type="Pfam" id="PF07992">
    <property type="entry name" value="Pyr_redox_2"/>
    <property type="match status" value="1"/>
</dbReference>
<dbReference type="Pfam" id="PF02852">
    <property type="entry name" value="Pyr_redox_dim"/>
    <property type="match status" value="1"/>
</dbReference>
<dbReference type="PIRSF" id="PIRSF000350">
    <property type="entry name" value="Mercury_reductase_MerA"/>
    <property type="match status" value="1"/>
</dbReference>
<dbReference type="PRINTS" id="PR00368">
    <property type="entry name" value="FADPNR"/>
</dbReference>
<dbReference type="PRINTS" id="PR00411">
    <property type="entry name" value="PNDRDTASEI"/>
</dbReference>
<dbReference type="SUPFAM" id="SSF51905">
    <property type="entry name" value="FAD/NAD(P)-binding domain"/>
    <property type="match status" value="1"/>
</dbReference>
<dbReference type="SUPFAM" id="SSF55424">
    <property type="entry name" value="FAD/NAD-linked reductases, dimerisation (C-terminal) domain"/>
    <property type="match status" value="1"/>
</dbReference>
<dbReference type="PROSITE" id="PS00076">
    <property type="entry name" value="PYRIDINE_REDOX_1"/>
    <property type="match status" value="1"/>
</dbReference>
<sequence>MAAAEAQYDLLVIGGGSGGLACSKRAASHGKKVAVCDFVKPSPPGTTWGLGGTCVNVGCIPKKLMHQAALLGEGMTDAESFGWEVAAPKHNWETMVGNVQGHIKSLNFGYRSDLMSNGVKYYNAYATFLDPHTVEAVDKKGKVTKITASEIVICTGGRPRYPDIPGAKELGITSDDVFALKSPPGRTLVVGASYVALECAGFIKGVGYDTTVMMRSIPLRGFDQQMAGLCKTYMQEHGVAFIEGAVPTAVEATPSGAKKVSWKLADGSVGSGEYDTVLFAIGRDVCTSAIGIDKAGVKLSSNGKVPTVNEQTNVPHIYAIGDIIDGEALNPPSATTELTPVAIQAGKLLADRLYAGKSALMDYSMVATTVYTPLEYGAVGLPEEEAIKLHGEDNIEVYHSYFKPLEWTLPHRGDNVCYAKLICLKPEGERVIGLHVCGPNAGEMTQGFAVAIKAGATKAHFDDTVGIHPTVAEEFTLLAATKRSGDSAEKSGCUG</sequence>
<organism>
    <name type="scientific">Emiliania huxleyi</name>
    <name type="common">Coccolithophore</name>
    <name type="synonym">Pontosphaera huxleyi</name>
    <dbReference type="NCBI Taxonomy" id="2903"/>
    <lineage>
        <taxon>Eukaryota</taxon>
        <taxon>Haptista</taxon>
        <taxon>Haptophyta</taxon>
        <taxon>Prymnesiophyceae</taxon>
        <taxon>Isochrysidales</taxon>
        <taxon>Noelaerhabdaceae</taxon>
        <taxon>Emiliania</taxon>
    </lineage>
</organism>
<keyword id="KW-0903">Direct protein sequencing</keyword>
<keyword id="KW-1015">Disulfide bond</keyword>
<keyword id="KW-0274">FAD</keyword>
<keyword id="KW-0285">Flavoprotein</keyword>
<keyword id="KW-0521">NADP</keyword>
<keyword id="KW-0560">Oxidoreductase</keyword>
<keyword id="KW-0676">Redox-active center</keyword>
<keyword id="KW-0711">Selenium</keyword>
<keyword id="KW-0712">Selenocysteine</keyword>
<protein>
    <recommendedName>
        <fullName>Thioredoxin reductase SEP1</fullName>
        <shortName evidence="3">EhSEP1</shortName>
        <ecNumber>1.8.1.9</ecNumber>
    </recommendedName>
</protein>
<gene>
    <name type="primary">SEP1</name>
</gene>
<proteinExistence type="evidence at protein level"/>
<accession>B9A1H3</accession>
<reference evidence="4 5" key="1">
    <citation type="journal article" date="2008" name="J. Biol. Chem.">
        <title>Identification and characterization of a selenoprotein, thioredoxin reductase, in a unicellular marine haptophyte alga, Emiliania huxleyi.</title>
        <authorList>
            <person name="Araie H."/>
            <person name="Suzuki I."/>
            <person name="Shiraiwa Y."/>
        </authorList>
    </citation>
    <scope>NUCLEOTIDE SEQUENCE [MRNA]</scope>
    <scope>PROTEIN SEQUENCE OF 25-35 AND 169-180</scope>
    <scope>ACTIVITY REGULATION</scope>
    <scope>BLOCKAGE OF N-TERMINUS</scope>
    <scope>PRESENCE OF SELENOCYSTEINE</scope>
    <source>
        <strain evidence="2">NIES-837 / EH-2</strain>
    </source>
</reference>
<comment type="catalytic activity">
    <reaction evidence="4">
        <text>[thioredoxin]-dithiol + NADP(+) = [thioredoxin]-disulfide + NADPH + H(+)</text>
        <dbReference type="Rhea" id="RHEA:20345"/>
        <dbReference type="Rhea" id="RHEA-COMP:10698"/>
        <dbReference type="Rhea" id="RHEA-COMP:10700"/>
        <dbReference type="ChEBI" id="CHEBI:15378"/>
        <dbReference type="ChEBI" id="CHEBI:29950"/>
        <dbReference type="ChEBI" id="CHEBI:50058"/>
        <dbReference type="ChEBI" id="CHEBI:57783"/>
        <dbReference type="ChEBI" id="CHEBI:58349"/>
        <dbReference type="EC" id="1.8.1.9"/>
    </reaction>
</comment>
<comment type="cofactor">
    <cofactor evidence="1">
        <name>FAD</name>
        <dbReference type="ChEBI" id="CHEBI:57692"/>
    </cofactor>
    <text evidence="1">Binds 1 FAD per subunit.</text>
</comment>
<comment type="activity regulation">
    <text evidence="2">Activity was very low in selenium-depleted cells, but increased 4-fold to the same level as in selenium-sufficient cells for 70 hours after the addition of 10 nm selenite.</text>
</comment>
<comment type="subunit">
    <text evidence="1">Homodimer.</text>
</comment>
<comment type="PTM">
    <text evidence="2">The N-terminus is blocked.</text>
</comment>
<comment type="miscellaneous">
    <text evidence="2">The thioredoxin reductase active site is a redox-active disulfide bond. The selenocysteine residue is also essential for catalytic activity.</text>
</comment>
<comment type="similarity">
    <text evidence="4">Belongs to the class-I pyridine nucleotide-disulfide oxidoreductase family.</text>
</comment>
<feature type="chain" id="PRO_0000393868" description="Thioredoxin reductase SEP1">
    <location>
        <begin position="1"/>
        <end position="495"/>
    </location>
</feature>
<feature type="active site" description="Proton acceptor" evidence="1">
    <location>
        <position position="468"/>
    </location>
</feature>
<feature type="binding site" evidence="1">
    <location>
        <begin position="37"/>
        <end position="54"/>
    </location>
    <ligand>
        <name>FAD</name>
        <dbReference type="ChEBI" id="CHEBI:57692"/>
    </ligand>
</feature>
<feature type="non-standard amino acid" description="Selenocysteine" evidence="2">
    <location>
        <position position="494"/>
    </location>
</feature>
<feature type="disulfide bond" description="Redox-active" evidence="1">
    <location>
        <begin position="54"/>
        <end position="59"/>
    </location>
</feature>
<feature type="cross-link" description="Cysteinyl-selenocysteine (Cys-Sec)" evidence="1">
    <location>
        <begin position="493"/>
        <end position="494"/>
    </location>
</feature>
<name>TRXR1_EMIHU</name>
<evidence type="ECO:0000250" key="1">
    <source>
        <dbReference type="UniProtKB" id="Q16881"/>
    </source>
</evidence>
<evidence type="ECO:0000269" key="2">
    <source>
    </source>
</evidence>
<evidence type="ECO:0000303" key="3">
    <source>
    </source>
</evidence>
<evidence type="ECO:0000305" key="4"/>
<evidence type="ECO:0000312" key="5">
    <source>
        <dbReference type="EMBL" id="BAH20464.1"/>
    </source>
</evidence>